<dbReference type="EMBL" id="BC120390">
    <property type="protein sequence ID" value="AAI20391.1"/>
    <property type="molecule type" value="mRNA"/>
</dbReference>
<dbReference type="RefSeq" id="NP_001068913.1">
    <property type="nucleotide sequence ID" value="NM_001075445.1"/>
</dbReference>
<dbReference type="SMR" id="Q0VC21"/>
<dbReference type="FunCoup" id="Q0VC21">
    <property type="interactions" value="2501"/>
</dbReference>
<dbReference type="STRING" id="9913.ENSBTAP00000001557"/>
<dbReference type="iPTMnet" id="Q0VC21"/>
<dbReference type="PaxDb" id="9913-ENSBTAP00000001557"/>
<dbReference type="Ensembl" id="ENSBTAT00000001557.7">
    <property type="protein sequence ID" value="ENSBTAP00000001557.5"/>
    <property type="gene ID" value="ENSBTAG00000001174.7"/>
</dbReference>
<dbReference type="GeneID" id="510347"/>
<dbReference type="KEGG" id="bta:510347"/>
<dbReference type="CTD" id="29088"/>
<dbReference type="VEuPathDB" id="HostDB:ENSBTAG00000001174"/>
<dbReference type="VGNC" id="VGNC:31619">
    <property type="gene designation" value="MRPL15"/>
</dbReference>
<dbReference type="eggNOG" id="KOG0846">
    <property type="taxonomic scope" value="Eukaryota"/>
</dbReference>
<dbReference type="GeneTree" id="ENSGT00390000009040"/>
<dbReference type="HOGENOM" id="CLU_055188_1_0_1"/>
<dbReference type="InParanoid" id="Q0VC21"/>
<dbReference type="OMA" id="EPGWLVN"/>
<dbReference type="OrthoDB" id="361383at2759"/>
<dbReference type="TreeFam" id="TF105918"/>
<dbReference type="Reactome" id="R-BTA-5389840">
    <property type="pathway name" value="Mitochondrial translation elongation"/>
</dbReference>
<dbReference type="Reactome" id="R-BTA-5419276">
    <property type="pathway name" value="Mitochondrial translation termination"/>
</dbReference>
<dbReference type="Proteomes" id="UP000009136">
    <property type="component" value="Chromosome 14"/>
</dbReference>
<dbReference type="Bgee" id="ENSBTAG00000001174">
    <property type="expression patterns" value="Expressed in oocyte and 105 other cell types or tissues"/>
</dbReference>
<dbReference type="GO" id="GO:0005743">
    <property type="term" value="C:mitochondrial inner membrane"/>
    <property type="evidence" value="ECO:0000304"/>
    <property type="project" value="Reactome"/>
</dbReference>
<dbReference type="GO" id="GO:0005762">
    <property type="term" value="C:mitochondrial large ribosomal subunit"/>
    <property type="evidence" value="ECO:0000250"/>
    <property type="project" value="UniProtKB"/>
</dbReference>
<dbReference type="GO" id="GO:0003735">
    <property type="term" value="F:structural constituent of ribosome"/>
    <property type="evidence" value="ECO:0000318"/>
    <property type="project" value="GO_Central"/>
</dbReference>
<dbReference type="GO" id="GO:1990830">
    <property type="term" value="P:cellular response to leukemia inhibitory factor"/>
    <property type="evidence" value="ECO:0007669"/>
    <property type="project" value="Ensembl"/>
</dbReference>
<dbReference type="GO" id="GO:0006412">
    <property type="term" value="P:translation"/>
    <property type="evidence" value="ECO:0007669"/>
    <property type="project" value="InterPro"/>
</dbReference>
<dbReference type="FunFam" id="3.100.10.10:FF:000006">
    <property type="entry name" value="39S ribosomal protein L15, mitochondrial"/>
    <property type="match status" value="1"/>
</dbReference>
<dbReference type="Gene3D" id="3.100.10.10">
    <property type="match status" value="1"/>
</dbReference>
<dbReference type="HAMAP" id="MF_01341">
    <property type="entry name" value="Ribosomal_uL15"/>
    <property type="match status" value="1"/>
</dbReference>
<dbReference type="InterPro" id="IPR030878">
    <property type="entry name" value="Ribosomal_uL15"/>
</dbReference>
<dbReference type="InterPro" id="IPR021131">
    <property type="entry name" value="Ribosomal_uL15/eL18"/>
</dbReference>
<dbReference type="InterPro" id="IPR036227">
    <property type="entry name" value="Ribosomal_uL15/eL18_sf"/>
</dbReference>
<dbReference type="InterPro" id="IPR005749">
    <property type="entry name" value="Ribosomal_uL15_bac-type"/>
</dbReference>
<dbReference type="PANTHER" id="PTHR12934">
    <property type="entry name" value="50S RIBOSOMAL PROTEIN L15"/>
    <property type="match status" value="1"/>
</dbReference>
<dbReference type="PANTHER" id="PTHR12934:SF11">
    <property type="entry name" value="LARGE RIBOSOMAL SUBUNIT PROTEIN UL15M"/>
    <property type="match status" value="1"/>
</dbReference>
<dbReference type="Pfam" id="PF00828">
    <property type="entry name" value="Ribosomal_L27A"/>
    <property type="match status" value="1"/>
</dbReference>
<dbReference type="SUPFAM" id="SSF52080">
    <property type="entry name" value="Ribosomal proteins L15p and L18e"/>
    <property type="match status" value="1"/>
</dbReference>
<organism>
    <name type="scientific">Bos taurus</name>
    <name type="common">Bovine</name>
    <dbReference type="NCBI Taxonomy" id="9913"/>
    <lineage>
        <taxon>Eukaryota</taxon>
        <taxon>Metazoa</taxon>
        <taxon>Chordata</taxon>
        <taxon>Craniata</taxon>
        <taxon>Vertebrata</taxon>
        <taxon>Euteleostomi</taxon>
        <taxon>Mammalia</taxon>
        <taxon>Eutheria</taxon>
        <taxon>Laurasiatheria</taxon>
        <taxon>Artiodactyla</taxon>
        <taxon>Ruminantia</taxon>
        <taxon>Pecora</taxon>
        <taxon>Bovidae</taxon>
        <taxon>Bovinae</taxon>
        <taxon>Bos</taxon>
    </lineage>
</organism>
<feature type="transit peptide" description="Mitochondrion" evidence="2">
    <location>
        <begin position="1"/>
        <end position="22"/>
    </location>
</feature>
<feature type="chain" id="PRO_0000257837" description="Large ribosomal subunit protein uL15m">
    <location>
        <begin position="23"/>
        <end position="297"/>
    </location>
</feature>
<feature type="region of interest" description="Disordered" evidence="1">
    <location>
        <begin position="27"/>
        <end position="68"/>
    </location>
</feature>
<feature type="compositionally biased region" description="Basic residues" evidence="1">
    <location>
        <begin position="37"/>
        <end position="53"/>
    </location>
</feature>
<evidence type="ECO:0000256" key="1">
    <source>
        <dbReference type="SAM" id="MobiDB-lite"/>
    </source>
</evidence>
<evidence type="ECO:0000269" key="2">
    <source>
    </source>
</evidence>
<evidence type="ECO:0000269" key="3">
    <source>
    </source>
</evidence>
<evidence type="ECO:0000305" key="4"/>
<comment type="subunit">
    <text evidence="3">Component of the mitochondrial ribosome large subunit (39S) which comprises a 16S rRNA and about 50 distinct proteins.</text>
</comment>
<comment type="subcellular location">
    <subcellularLocation>
        <location evidence="2 3">Mitochondrion</location>
    </subcellularLocation>
</comment>
<comment type="similarity">
    <text evidence="4">Belongs to the universal ribosomal protein uL15 family.</text>
</comment>
<name>RM15_BOVIN</name>
<accession>Q0VC21</accession>
<protein>
    <recommendedName>
        <fullName evidence="4">Large ribosomal subunit protein uL15m</fullName>
    </recommendedName>
    <alternativeName>
        <fullName>39S ribosomal protein L15, mitochondrial</fullName>
        <shortName>L15mt</shortName>
        <shortName>MRP-L15</shortName>
    </alternativeName>
</protein>
<proteinExistence type="evidence at protein level"/>
<keyword id="KW-0903">Direct protein sequencing</keyword>
<keyword id="KW-0496">Mitochondrion</keyword>
<keyword id="KW-1185">Reference proteome</keyword>
<keyword id="KW-0687">Ribonucleoprotein</keyword>
<keyword id="KW-0689">Ribosomal protein</keyword>
<keyword id="KW-0809">Transit peptide</keyword>
<gene>
    <name type="primary">MRPL15</name>
</gene>
<sequence length="297" mass="33674">MAGPVRGAAGPWALDLLRALPRVSLANLRPNPGSRKPERRRRGQRRGRKCGRGHKGERQRGTRPRLGFEGGQTPFYLRIPKYGFNEGHSFRRQYQPLSLNRLQYLIDLGRVDPTQPIDLTQLVNGRGVTIQPSKRDYGVQLVEEGADTFKAKVNIEVQLASELAIAAIEKNGGVVTTAFYDPRSLEILCKPIPFFLRGQPIPKRMLPPEALVPYYTDARNRGYLADPARFPEARLELAKKYGYILPDITKDELFKMLSSRKDPRQIFFGLAPGWVVNMADKKILKPTDEKLLEYYSS</sequence>
<reference key="1">
    <citation type="submission" date="2006-08" db="EMBL/GenBank/DDBJ databases">
        <authorList>
            <consortium name="NIH - Mammalian Gene Collection (MGC) project"/>
        </authorList>
    </citation>
    <scope>NUCLEOTIDE SEQUENCE [LARGE SCALE MRNA]</scope>
    <source>
        <strain>Hereford</strain>
        <tissue>Fetal muscle</tissue>
    </source>
</reference>
<reference key="2">
    <citation type="journal article" date="1999" name="J. Biol. Chem.">
        <title>Mammalian mitochondrial ribosomal proteins (2). Amino acid sequencing, characterization, and identification of corresponding gene sequences.</title>
        <authorList>
            <person name="O'Brien T.W."/>
            <person name="Fiesler S.E."/>
            <person name="Denslow N.D."/>
            <person name="Thiede B."/>
            <person name="Wittmann-Liebold B."/>
            <person name="Mougey E.B."/>
            <person name="Sylvester J.E."/>
            <person name="Graack H.R."/>
        </authorList>
    </citation>
    <scope>PROTEIN SEQUENCE OF 23-35</scope>
    <scope>SUBCELLULAR LOCATION</scope>
</reference>
<reference key="3">
    <citation type="journal article" date="2001" name="J. Biol. Chem.">
        <title>Structural compensation for the deficit of rRNA with proteins in the mammalian mitochondrial ribosome. Systematic analysis of protein components of the large ribosomal subunit from mammalian mitochondria.</title>
        <authorList>
            <person name="Suzuki T."/>
            <person name="Terasaki M."/>
            <person name="Takemoto-Hori C."/>
            <person name="Hanada T."/>
            <person name="Ueda T."/>
            <person name="Wada A."/>
            <person name="Watanabe K."/>
        </authorList>
    </citation>
    <scope>IDENTIFICATION BY MASS SPECTROMETRY</scope>
    <scope>SUBCELLULAR LOCATION</scope>
    <scope>SUBUNIT</scope>
</reference>